<dbReference type="EC" id="2.7.7.6" evidence="6"/>
<dbReference type="EMBL" id="FJ515667">
    <property type="protein sequence ID" value="ACL36490.1"/>
    <property type="status" value="ALT_INIT"/>
    <property type="molecule type" value="Genomic_DNA"/>
</dbReference>
<dbReference type="EMBL" id="CP077717">
    <property type="protein sequence ID" value="QXJ27176.1"/>
    <property type="molecule type" value="Genomic_DNA"/>
</dbReference>
<dbReference type="PDB" id="2WAQ">
    <property type="method" value="X-ray"/>
    <property type="resolution" value="3.35 A"/>
    <property type="chains" value="B=1-1128"/>
</dbReference>
<dbReference type="PDB" id="2WB1">
    <property type="method" value="X-ray"/>
    <property type="resolution" value="3.52 A"/>
    <property type="chains" value="B/R=1-1128"/>
</dbReference>
<dbReference type="PDB" id="2Y0S">
    <property type="method" value="X-ray"/>
    <property type="resolution" value="3.80 A"/>
    <property type="chains" value="B/R=1-1128"/>
</dbReference>
<dbReference type="PDB" id="4AYB">
    <property type="method" value="X-ray"/>
    <property type="resolution" value="3.20 A"/>
    <property type="chains" value="B=1-1128"/>
</dbReference>
<dbReference type="PDB" id="4V8S">
    <property type="method" value="X-ray"/>
    <property type="resolution" value="4.32 A"/>
    <property type="chains" value="AR/BB=1-1128"/>
</dbReference>
<dbReference type="PDBsum" id="2WAQ"/>
<dbReference type="PDBsum" id="2WB1"/>
<dbReference type="PDBsum" id="2Y0S"/>
<dbReference type="PDBsum" id="4AYB"/>
<dbReference type="PDBsum" id="4V8S"/>
<dbReference type="SMR" id="B8YB55"/>
<dbReference type="KEGG" id="sshi:J5U23_00030"/>
<dbReference type="BRENDA" id="2.7.7.6">
    <property type="organism ID" value="6162"/>
</dbReference>
<dbReference type="EvolutionaryTrace" id="B8YB55"/>
<dbReference type="Proteomes" id="UP000694018">
    <property type="component" value="Chromosome"/>
</dbReference>
<dbReference type="GO" id="GO:0005737">
    <property type="term" value="C:cytoplasm"/>
    <property type="evidence" value="ECO:0007669"/>
    <property type="project" value="UniProtKB-SubCell"/>
</dbReference>
<dbReference type="GO" id="GO:0000428">
    <property type="term" value="C:DNA-directed RNA polymerase complex"/>
    <property type="evidence" value="ECO:0000314"/>
    <property type="project" value="UniProtKB"/>
</dbReference>
<dbReference type="GO" id="GO:0003677">
    <property type="term" value="F:DNA binding"/>
    <property type="evidence" value="ECO:0007669"/>
    <property type="project" value="UniProtKB-KW"/>
</dbReference>
<dbReference type="GO" id="GO:0003899">
    <property type="term" value="F:DNA-directed RNA polymerase activity"/>
    <property type="evidence" value="ECO:0007669"/>
    <property type="project" value="UniProtKB-EC"/>
</dbReference>
<dbReference type="GO" id="GO:0032549">
    <property type="term" value="F:ribonucleoside binding"/>
    <property type="evidence" value="ECO:0007669"/>
    <property type="project" value="InterPro"/>
</dbReference>
<dbReference type="GO" id="GO:0008270">
    <property type="term" value="F:zinc ion binding"/>
    <property type="evidence" value="ECO:0007669"/>
    <property type="project" value="InterPro"/>
</dbReference>
<dbReference type="GO" id="GO:0006351">
    <property type="term" value="P:DNA-templated transcription"/>
    <property type="evidence" value="ECO:0007669"/>
    <property type="project" value="InterPro"/>
</dbReference>
<dbReference type="CDD" id="cd00653">
    <property type="entry name" value="RNA_pol_B_RPB2"/>
    <property type="match status" value="1"/>
</dbReference>
<dbReference type="FunFam" id="2.40.270.10:FF:000006">
    <property type="entry name" value="DNA-directed RNA polymerase subunit beta"/>
    <property type="match status" value="1"/>
</dbReference>
<dbReference type="FunFam" id="3.90.1800.10:FF:000002">
    <property type="entry name" value="DNA-directed RNA polymerase subunit beta"/>
    <property type="match status" value="1"/>
</dbReference>
<dbReference type="Gene3D" id="2.40.50.150">
    <property type="match status" value="1"/>
</dbReference>
<dbReference type="Gene3D" id="3.90.1070.20">
    <property type="match status" value="1"/>
</dbReference>
<dbReference type="Gene3D" id="3.90.1100.10">
    <property type="match status" value="1"/>
</dbReference>
<dbReference type="Gene3D" id="2.40.270.10">
    <property type="entry name" value="DNA-directed RNA polymerase, subunit 2, domain 6"/>
    <property type="match status" value="1"/>
</dbReference>
<dbReference type="Gene3D" id="3.90.1800.10">
    <property type="entry name" value="RNA polymerase alpha subunit dimerisation domain"/>
    <property type="match status" value="1"/>
</dbReference>
<dbReference type="Gene3D" id="3.90.1110.10">
    <property type="entry name" value="RNA polymerase Rpb2, domain 2"/>
    <property type="match status" value="1"/>
</dbReference>
<dbReference type="InterPro" id="IPR015712">
    <property type="entry name" value="DNA-dir_RNA_pol_su2"/>
</dbReference>
<dbReference type="InterPro" id="IPR007120">
    <property type="entry name" value="DNA-dir_RNAP_su2_dom"/>
</dbReference>
<dbReference type="InterPro" id="IPR037033">
    <property type="entry name" value="DNA-dir_RNAP_su2_hyb_sf"/>
</dbReference>
<dbReference type="InterPro" id="IPR007121">
    <property type="entry name" value="RNA_pol_bsu_CS"/>
</dbReference>
<dbReference type="InterPro" id="IPR007644">
    <property type="entry name" value="RNA_pol_bsu_protrusion"/>
</dbReference>
<dbReference type="InterPro" id="IPR007642">
    <property type="entry name" value="RNA_pol_Rpb2_2"/>
</dbReference>
<dbReference type="InterPro" id="IPR037034">
    <property type="entry name" value="RNA_pol_Rpb2_2_sf"/>
</dbReference>
<dbReference type="InterPro" id="IPR007645">
    <property type="entry name" value="RNA_pol_Rpb2_3"/>
</dbReference>
<dbReference type="InterPro" id="IPR007646">
    <property type="entry name" value="RNA_pol_Rpb2_4"/>
</dbReference>
<dbReference type="InterPro" id="IPR007647">
    <property type="entry name" value="RNA_pol_Rpb2_5"/>
</dbReference>
<dbReference type="InterPro" id="IPR007641">
    <property type="entry name" value="RNA_pol_Rpb2_7"/>
</dbReference>
<dbReference type="InterPro" id="IPR014724">
    <property type="entry name" value="RNA_pol_RPB2_OB-fold"/>
</dbReference>
<dbReference type="InterPro" id="IPR019969">
    <property type="entry name" value="RNAP_Rpo2"/>
</dbReference>
<dbReference type="NCBIfam" id="NF006335">
    <property type="entry name" value="PRK08565.1"/>
    <property type="match status" value="1"/>
</dbReference>
<dbReference type="NCBIfam" id="NF007175">
    <property type="entry name" value="PRK09606.1"/>
    <property type="match status" value="1"/>
</dbReference>
<dbReference type="NCBIfam" id="TIGR03670">
    <property type="entry name" value="rpoB_arch"/>
    <property type="match status" value="1"/>
</dbReference>
<dbReference type="PANTHER" id="PTHR20856">
    <property type="entry name" value="DNA-DIRECTED RNA POLYMERASE I SUBUNIT 2"/>
    <property type="match status" value="1"/>
</dbReference>
<dbReference type="Pfam" id="PF04563">
    <property type="entry name" value="RNA_pol_Rpb2_1"/>
    <property type="match status" value="1"/>
</dbReference>
<dbReference type="Pfam" id="PF04561">
    <property type="entry name" value="RNA_pol_Rpb2_2"/>
    <property type="match status" value="1"/>
</dbReference>
<dbReference type="Pfam" id="PF04565">
    <property type="entry name" value="RNA_pol_Rpb2_3"/>
    <property type="match status" value="1"/>
</dbReference>
<dbReference type="Pfam" id="PF04566">
    <property type="entry name" value="RNA_pol_Rpb2_4"/>
    <property type="match status" value="1"/>
</dbReference>
<dbReference type="Pfam" id="PF04567">
    <property type="entry name" value="RNA_pol_Rpb2_5"/>
    <property type="match status" value="1"/>
</dbReference>
<dbReference type="Pfam" id="PF00562">
    <property type="entry name" value="RNA_pol_Rpb2_6"/>
    <property type="match status" value="1"/>
</dbReference>
<dbReference type="Pfam" id="PF04560">
    <property type="entry name" value="RNA_pol_Rpb2_7"/>
    <property type="match status" value="1"/>
</dbReference>
<dbReference type="SUPFAM" id="SSF64484">
    <property type="entry name" value="beta and beta-prime subunits of DNA dependent RNA-polymerase"/>
    <property type="match status" value="1"/>
</dbReference>
<dbReference type="PROSITE" id="PS01166">
    <property type="entry name" value="RNA_POL_BETA"/>
    <property type="match status" value="1"/>
</dbReference>
<keyword id="KW-0002">3D-structure</keyword>
<keyword id="KW-0963">Cytoplasm</keyword>
<keyword id="KW-0238">DNA-binding</keyword>
<keyword id="KW-0240">DNA-directed RNA polymerase</keyword>
<keyword id="KW-0479">Metal-binding</keyword>
<keyword id="KW-0548">Nucleotidyltransferase</keyword>
<keyword id="KW-0804">Transcription</keyword>
<keyword id="KW-0808">Transferase</keyword>
<keyword id="KW-0862">Zinc</keyword>
<proteinExistence type="evidence at protein level"/>
<gene>
    <name evidence="4" type="primary">rpo2</name>
    <name evidence="9" type="ORF">J5U23_00030</name>
</gene>
<organism>
    <name type="scientific">Saccharolobus shibatae (strain ATCC 51178 / DSM 5389 / JCM 8931 / NBRC 15437 / B12)</name>
    <name type="common">Sulfolobus shibatae</name>
    <dbReference type="NCBI Taxonomy" id="523848"/>
    <lineage>
        <taxon>Archaea</taxon>
        <taxon>Thermoproteota</taxon>
        <taxon>Thermoprotei</taxon>
        <taxon>Sulfolobales</taxon>
        <taxon>Sulfolobaceae</taxon>
        <taxon>Saccharolobus</taxon>
    </lineage>
</organism>
<name>RPO2_SACSH</name>
<accession>B8YB55</accession>
<accession>A0A8F5BL77</accession>
<comment type="function">
    <text evidence="3 6 7 8">DNA-dependent RNA polymerase (RNAP) catalyzes the transcription of DNA into RNA using the four ribonucleoside triphosphates as substrates (Probable). This subunit is involved in DNA promoter recognition (PubMed:22848102).</text>
</comment>
<comment type="catalytic activity">
    <reaction evidence="6 7 8">
        <text>RNA(n) + a ribonucleoside 5'-triphosphate = RNA(n+1) + diphosphate</text>
        <dbReference type="Rhea" id="RHEA:21248"/>
        <dbReference type="Rhea" id="RHEA-COMP:14527"/>
        <dbReference type="Rhea" id="RHEA-COMP:17342"/>
        <dbReference type="ChEBI" id="CHEBI:33019"/>
        <dbReference type="ChEBI" id="CHEBI:61557"/>
        <dbReference type="ChEBI" id="CHEBI:140395"/>
        <dbReference type="EC" id="2.7.7.6"/>
    </reaction>
</comment>
<comment type="cofactor">
    <cofactor evidence="1">
        <name>Zn(2+)</name>
        <dbReference type="ChEBI" id="CHEBI:29105"/>
    </cofactor>
    <text evidence="1 2 3">Binds at least 1 Zn(2+) ion per subunit.</text>
</comment>
<comment type="subunit">
    <text evidence="1 2 3">Part of the 13-subunit RNA polymerase complex.</text>
</comment>
<comment type="subcellular location">
    <subcellularLocation>
        <location evidence="3">Cytoplasm</location>
    </subcellularLocation>
</comment>
<comment type="similarity">
    <text evidence="5">Belongs to the RNA polymerase beta chain family.</text>
</comment>
<comment type="sequence caution" evidence="5">
    <conflict type="erroneous initiation">
        <sequence resource="EMBL-CDS" id="ACL36490"/>
    </conflict>
    <text>Extended N-terminus.</text>
</comment>
<evidence type="ECO:0000269" key="1">
    <source>
    </source>
</evidence>
<evidence type="ECO:0000269" key="2">
    <source>
    </source>
</evidence>
<evidence type="ECO:0000269" key="3">
    <source>
    </source>
</evidence>
<evidence type="ECO:0000303" key="4">
    <source>
    </source>
</evidence>
<evidence type="ECO:0000305" key="5"/>
<evidence type="ECO:0000305" key="6">
    <source>
    </source>
</evidence>
<evidence type="ECO:0000305" key="7">
    <source>
    </source>
</evidence>
<evidence type="ECO:0000305" key="8">
    <source>
    </source>
</evidence>
<evidence type="ECO:0000312" key="9">
    <source>
        <dbReference type="EMBL" id="QXJ27176.1"/>
    </source>
</evidence>
<evidence type="ECO:0007744" key="10">
    <source>
        <dbReference type="PDB" id="2WAQ"/>
    </source>
</evidence>
<evidence type="ECO:0007744" key="11">
    <source>
        <dbReference type="PDB" id="2WB1"/>
    </source>
</evidence>
<evidence type="ECO:0007744" key="12">
    <source>
        <dbReference type="PDB" id="2Y0S"/>
    </source>
</evidence>
<evidence type="ECO:0007744" key="13">
    <source>
        <dbReference type="PDB" id="4AYB"/>
    </source>
</evidence>
<evidence type="ECO:0007744" key="14">
    <source>
        <dbReference type="PDB" id="4V8S"/>
    </source>
</evidence>
<evidence type="ECO:0007829" key="15">
    <source>
        <dbReference type="PDB" id="2WAQ"/>
    </source>
</evidence>
<evidence type="ECO:0007829" key="16">
    <source>
        <dbReference type="PDB" id="4AYB"/>
    </source>
</evidence>
<sequence>MSSNLSIDERWKVIEAYFKSKGLVRQHLDSYNDFVRNKLQEIIDEQGEIPTEIPGLKVRLGKIRIGKPRVRESDRGEREISPMEARLRNLTYAAPLWLTMIPVENNIEAEPEEVYIGDLPIMLKSAIDPISQYTLDKLIEIGEDPKDPGGYFIVNGSERVIVTQEDLAPNRVLVDTGKTGSNITHTAKIISSTAGYRVPVTIERLKDGTFHVSFPAVPGKIPFVILMRALGILTDRDIVYAVSLDPEIQNELFPSLEQASSIANVDDALDFIGSRVAIGQKRENRIEKAQQIIDKYFLPHLGTSADDRRKKAYYLAYAISKVIELYLGRREPDDKDHYANKRLRLAGDLFASLFRVAFKAFVKDLTYQLEKSKVRGRKLALKALVRPDIVTERIRHALATGNWVGGRTGVSQLLDRTNWLSMLSHLRRVISSLARGQPNFEARDLHGTQWGRMCPFETPEGPNSGLVKNLALMAQIAVGINEKIVEKTLYEMGVVPVEEVIRRVTEGGEDQNEYLKWSKVILNGRLVGYYRDGEELAKKIRERRRKGEISDEVNVGHIVTDFINEVHVNCDSGRVRRPLIIVSNGNPLVTREDIEKLDSGSITFDDLVRQGKIEYLDAEEEENAYVALEPSDLTPEHTHLEIWSPAILGITASIIPYPEHNQSPRNTYQSAMAKQALGLYAANYQLRTDTRAHLLHYPQRPLVQTRALDIIGYTNRPAGNNAILAVISFTGYNMEDSIIMNRSSVERGMYRSTFFRLYSTEEVKYPGGQEDKIVMPEPGVRGYKGKEYYRLLEDNGVVSPEVEVKGGDVLIGKVSPPRFLQEFKELSPEQAKRDTSIVTRHGEMGIVDLVLITETAEGNKLVKVRVRDLRIPSIGDKFASRHGQKGVIGMLIPQVDMPYTVKGVVPDVILNPHALPSRMTLGQIMEGIAGKYAALSGNIVDATPFYKTPIEQLQNEILKYGYLPDATEVTYDGRTGQKIKSRIYFGVVYYQKLHHMVADKIHARARGPVQILTRQPTEGRAREGGLRFGEMERDCLIGFGTAMLLKDRLLDNSDRTTIYVCDQCGYIGWYDKNKNKYVCPIHGDKSNLFPVTVSYAFKLLIQELMSMIISPRLILEDRVGLSGGKGNE</sequence>
<protein>
    <recommendedName>
        <fullName evidence="4">DNA-directed RNA polymerase subunit Rpo2</fullName>
        <ecNumber evidence="6">2.7.7.6</ecNumber>
    </recommendedName>
    <alternativeName>
        <fullName>DNA-directed RNA polymerase subunit beta</fullName>
    </alternativeName>
</protein>
<reference evidence="10 11" key="1">
    <citation type="journal article" date="2009" name="PLoS Biol.">
        <title>Evolution of complex RNA polymerases: the complete archaeal RNA polymerase structure.</title>
        <authorList>
            <person name="Korkhin Y."/>
            <person name="Unligil U.M."/>
            <person name="Littlefield O."/>
            <person name="Nelson P.J."/>
            <person name="Stuart D.I."/>
            <person name="Sigler P.B."/>
            <person name="Bell S.D."/>
            <person name="Abrescia N.G."/>
        </authorList>
    </citation>
    <scope>NUCLEOTIDE SEQUENCE [GENOMIC DNA]</scope>
    <scope>X-RAY CRYSTALLOGRAPHY (3.35 ANGSTROMS) OF THE RNA POLYMERASE COMPLEX IN COMPLEX WITH ZINC</scope>
    <scope>FUNCTION</scope>
    <scope>COFACTOR</scope>
    <scope>SUBUNIT</scope>
    <scope>NOMENCLATURE</scope>
    <source>
        <strain>ATCC 51178 / DSM 5389 / JCM 8931 / NBRC 15437 / B12</strain>
    </source>
</reference>
<reference evidence="9" key="2">
    <citation type="journal article" date="2021" name="Environ. Microbiol.">
        <title>New insights into the diversity and evolution of the archaeal mobilome from three complete genomes of Saccharolobus shibatae.</title>
        <authorList>
            <person name="Medvedeva S."/>
            <person name="Brandt D."/>
            <person name="Cvirkaite-Krupovic V."/>
            <person name="Liu Y."/>
            <person name="Severinov K."/>
            <person name="Ishino S."/>
            <person name="Ishino Y."/>
            <person name="Prangishvili D."/>
            <person name="Kalinowski J."/>
            <person name="Krupovic M."/>
        </authorList>
    </citation>
    <scope>NUCLEOTIDE SEQUENCE [LARGE SCALE GENOMIC DNA]</scope>
    <source>
        <strain>ATCC 51178 / DSM 5389 / JCM 8931 / NBRC 15437 / B12</strain>
    </source>
</reference>
<reference evidence="12" key="3">
    <citation type="journal article" date="2011" name="Biochem. Soc. Trans.">
        <title>Archaeal RNA polymerase: the influence of the protruding stalk in crystal packing and preliminary biophysical analysis of the Rpo13 subunit.</title>
        <authorList>
            <person name="Wojtas M."/>
            <person name="Peralta B."/>
            <person name="Ondiviela M."/>
            <person name="Mogni M."/>
            <person name="Bell S.D."/>
            <person name="Abrescia N.G."/>
        </authorList>
    </citation>
    <scope>X-RAY CRYSTALLOGRAPHY (3.80 ANGSTROMS) OF THE RNA POLYMERASE COMPLEX IN COMPLEX WITH ZINC</scope>
    <scope>FUNCTION</scope>
    <scope>COFACTOR</scope>
    <scope>SUBUNIT</scope>
    <source>
        <strain>ATCC 51178 / DSM 5389 / JCM 8931 / NBRC 15437 / B12</strain>
    </source>
</reference>
<reference evidence="13 14" key="4">
    <citation type="journal article" date="2012" name="Nucleic Acids Res.">
        <title>Structural and functional analyses of the interaction of archaeal RNA polymerase with DNA.</title>
        <authorList>
            <person name="Wojtas M.N."/>
            <person name="Mogni M."/>
            <person name="Millet O."/>
            <person name="Bell S.D."/>
            <person name="Abrescia N.G."/>
        </authorList>
    </citation>
    <scope>X-RAY CRYSTALLOGRAPHY (3.20 ANGSTROMS) OF THE RNA POLYMERASE COMPLEX IN COMPLEX WITH ZINC WITH AND WITHOUT DNA</scope>
    <scope>FUNCTION</scope>
    <scope>COFACTOR</scope>
    <scope>SUBUNIT</scope>
    <scope>SUBCELLULAR LOCATION</scope>
    <scope>DNA-BINDING</scope>
    <source>
        <strain>ATCC 51178 / DSM 5389 / JCM 8931 / NBRC 15437 / B12</strain>
    </source>
</reference>
<feature type="chain" id="PRO_0000453794" description="DNA-directed RNA polymerase subunit Rpo2">
    <location>
        <begin position="1"/>
        <end position="1128"/>
    </location>
</feature>
<feature type="binding site" evidence="8">
    <location>
        <position position="178"/>
    </location>
    <ligand>
        <name>dsDNA</name>
        <dbReference type="ChEBI" id="CHEBI:4705"/>
    </ligand>
</feature>
<feature type="binding site" evidence="8">
    <location>
        <begin position="181"/>
        <end position="182"/>
    </location>
    <ligand>
        <name>dsDNA</name>
        <dbReference type="ChEBI" id="CHEBI:4705"/>
    </ligand>
</feature>
<feature type="binding site" evidence="8">
    <location>
        <position position="206"/>
    </location>
    <ligand>
        <name>dsDNA</name>
        <dbReference type="ChEBI" id="CHEBI:4705"/>
    </ligand>
</feature>
<feature type="binding site" evidence="8">
    <location>
        <begin position="435"/>
        <end position="439"/>
    </location>
    <ligand>
        <name>dsDNA</name>
        <dbReference type="ChEBI" id="CHEBI:4705"/>
    </ligand>
</feature>
<feature type="binding site" evidence="8">
    <location>
        <begin position="1027"/>
        <end position="1032"/>
    </location>
    <ligand>
        <name>dsDNA</name>
        <dbReference type="ChEBI" id="CHEBI:4705"/>
    </ligand>
</feature>
<feature type="binding site" evidence="10 11 12 13 14">
    <location>
        <position position="1061"/>
    </location>
    <ligand>
        <name>Zn(2+)</name>
        <dbReference type="ChEBI" id="CHEBI:29105"/>
    </ligand>
</feature>
<feature type="binding site" evidence="10 11 12 13 14">
    <location>
        <position position="1064"/>
    </location>
    <ligand>
        <name>Zn(2+)</name>
        <dbReference type="ChEBI" id="CHEBI:29105"/>
    </ligand>
</feature>
<feature type="binding site" evidence="10 11 12 13 14">
    <location>
        <position position="1079"/>
    </location>
    <ligand>
        <name>Zn(2+)</name>
        <dbReference type="ChEBI" id="CHEBI:29105"/>
    </ligand>
</feature>
<feature type="binding site" evidence="13 14">
    <location>
        <position position="1082"/>
    </location>
    <ligand>
        <name>Zn(2+)</name>
        <dbReference type="ChEBI" id="CHEBI:29105"/>
    </ligand>
</feature>
<feature type="helix" evidence="16">
    <location>
        <begin position="7"/>
        <end position="20"/>
    </location>
</feature>
<feature type="helix" evidence="16">
    <location>
        <begin position="26"/>
        <end position="36"/>
    </location>
</feature>
<feature type="turn" evidence="16">
    <location>
        <begin position="37"/>
        <end position="39"/>
    </location>
</feature>
<feature type="helix" evidence="16">
    <location>
        <begin position="40"/>
        <end position="46"/>
    </location>
</feature>
<feature type="strand" evidence="16">
    <location>
        <begin position="57"/>
        <end position="65"/>
    </location>
</feature>
<feature type="strand" evidence="16">
    <location>
        <begin position="68"/>
        <end position="72"/>
    </location>
</feature>
<feature type="turn" evidence="16">
    <location>
        <begin position="73"/>
        <end position="75"/>
    </location>
</feature>
<feature type="strand" evidence="16">
    <location>
        <begin position="76"/>
        <end position="79"/>
    </location>
</feature>
<feature type="helix" evidence="16">
    <location>
        <begin position="82"/>
        <end position="88"/>
    </location>
</feature>
<feature type="strand" evidence="16">
    <location>
        <begin position="93"/>
        <end position="104"/>
    </location>
</feature>
<feature type="strand" evidence="16">
    <location>
        <begin position="112"/>
        <end position="120"/>
    </location>
</feature>
<feature type="strand" evidence="15">
    <location>
        <begin position="125"/>
        <end position="128"/>
    </location>
</feature>
<feature type="helix" evidence="16">
    <location>
        <begin position="129"/>
        <end position="132"/>
    </location>
</feature>
<feature type="helix" evidence="16">
    <location>
        <begin position="135"/>
        <end position="141"/>
    </location>
</feature>
<feature type="strand" evidence="16">
    <location>
        <begin position="152"/>
        <end position="154"/>
    </location>
</feature>
<feature type="strand" evidence="16">
    <location>
        <begin position="157"/>
        <end position="161"/>
    </location>
</feature>
<feature type="strand" evidence="16">
    <location>
        <begin position="163"/>
        <end position="167"/>
    </location>
</feature>
<feature type="strand" evidence="16">
    <location>
        <begin position="173"/>
        <end position="176"/>
    </location>
</feature>
<feature type="strand" evidence="16">
    <location>
        <begin position="182"/>
        <end position="188"/>
    </location>
</feature>
<feature type="strand" evidence="16">
    <location>
        <begin position="190"/>
        <end position="192"/>
    </location>
</feature>
<feature type="strand" evidence="16">
    <location>
        <begin position="197"/>
        <end position="199"/>
    </location>
</feature>
<feature type="strand" evidence="16">
    <location>
        <begin position="202"/>
        <end position="205"/>
    </location>
</feature>
<feature type="turn" evidence="16">
    <location>
        <begin position="206"/>
        <end position="208"/>
    </location>
</feature>
<feature type="strand" evidence="15">
    <location>
        <begin position="211"/>
        <end position="213"/>
    </location>
</feature>
<feature type="strand" evidence="16">
    <location>
        <begin position="215"/>
        <end position="217"/>
    </location>
</feature>
<feature type="helix" evidence="16">
    <location>
        <begin position="223"/>
        <end position="230"/>
    </location>
</feature>
<feature type="helix" evidence="16">
    <location>
        <begin position="235"/>
        <end position="242"/>
    </location>
</feature>
<feature type="helix" evidence="16">
    <location>
        <begin position="246"/>
        <end position="249"/>
    </location>
</feature>
<feature type="turn" evidence="16">
    <location>
        <begin position="250"/>
        <end position="252"/>
    </location>
</feature>
<feature type="helix" evidence="16">
    <location>
        <begin position="253"/>
        <end position="259"/>
    </location>
</feature>
<feature type="turn" evidence="16">
    <location>
        <begin position="260"/>
        <end position="262"/>
    </location>
</feature>
<feature type="helix" evidence="16">
    <location>
        <begin position="267"/>
        <end position="277"/>
    </location>
</feature>
<feature type="helix" evidence="16">
    <location>
        <begin position="282"/>
        <end position="294"/>
    </location>
</feature>
<feature type="turn" evidence="15">
    <location>
        <begin position="299"/>
        <end position="301"/>
    </location>
</feature>
<feature type="helix" evidence="15">
    <location>
        <begin position="305"/>
        <end position="307"/>
    </location>
</feature>
<feature type="helix" evidence="16">
    <location>
        <begin position="308"/>
        <end position="327"/>
    </location>
</feature>
<feature type="helix" evidence="16">
    <location>
        <begin position="338"/>
        <end position="340"/>
    </location>
</feature>
<feature type="strand" evidence="16">
    <location>
        <begin position="341"/>
        <end position="344"/>
    </location>
</feature>
<feature type="helix" evidence="16">
    <location>
        <begin position="346"/>
        <end position="372"/>
    </location>
</feature>
<feature type="strand" evidence="15">
    <location>
        <begin position="375"/>
        <end position="377"/>
    </location>
</feature>
<feature type="helix" evidence="16">
    <location>
        <begin position="381"/>
        <end position="384"/>
    </location>
</feature>
<feature type="helix" evidence="16">
    <location>
        <begin position="388"/>
        <end position="399"/>
    </location>
</feature>
<feature type="strand" evidence="16">
    <location>
        <begin position="404"/>
        <end position="406"/>
    </location>
</feature>
<feature type="strand" evidence="16">
    <location>
        <begin position="411"/>
        <end position="413"/>
    </location>
</feature>
<feature type="helix" evidence="16">
    <location>
        <begin position="419"/>
        <end position="426"/>
    </location>
</feature>
<feature type="strand" evidence="16">
    <location>
        <begin position="428"/>
        <end position="431"/>
    </location>
</feature>
<feature type="strand" evidence="16">
    <location>
        <begin position="435"/>
        <end position="437"/>
    </location>
</feature>
<feature type="helix" evidence="16">
    <location>
        <begin position="440"/>
        <end position="443"/>
    </location>
</feature>
<feature type="helix" evidence="16">
    <location>
        <begin position="447"/>
        <end position="449"/>
    </location>
</feature>
<feature type="turn" evidence="16">
    <location>
        <begin position="450"/>
        <end position="452"/>
    </location>
</feature>
<feature type="turn" evidence="15">
    <location>
        <begin position="462"/>
        <end position="466"/>
    </location>
</feature>
<feature type="strand" evidence="16">
    <location>
        <begin position="467"/>
        <end position="473"/>
    </location>
</feature>
<feature type="helix" evidence="16">
    <location>
        <begin position="482"/>
        <end position="491"/>
    </location>
</feature>
<feature type="helix" evidence="16">
    <location>
        <begin position="497"/>
        <end position="502"/>
    </location>
</feature>
<feature type="turn" evidence="16">
    <location>
        <begin position="503"/>
        <end position="506"/>
    </location>
</feature>
<feature type="strand" evidence="16">
    <location>
        <begin position="519"/>
        <end position="522"/>
    </location>
</feature>
<feature type="strand" evidence="16">
    <location>
        <begin position="525"/>
        <end position="529"/>
    </location>
</feature>
<feature type="helix" evidence="16">
    <location>
        <begin position="533"/>
        <end position="546"/>
    </location>
</feature>
<feature type="strand" evidence="16">
    <location>
        <begin position="554"/>
        <end position="558"/>
    </location>
</feature>
<feature type="turn" evidence="16">
    <location>
        <begin position="560"/>
        <end position="562"/>
    </location>
</feature>
<feature type="strand" evidence="16">
    <location>
        <begin position="565"/>
        <end position="569"/>
    </location>
</feature>
<feature type="strand" evidence="16">
    <location>
        <begin position="575"/>
        <end position="588"/>
    </location>
</feature>
<feature type="helix" evidence="16">
    <location>
        <begin position="591"/>
        <end position="598"/>
    </location>
</feature>
<feature type="turn" evidence="16">
    <location>
        <begin position="599"/>
        <end position="601"/>
    </location>
</feature>
<feature type="helix" evidence="16">
    <location>
        <begin position="604"/>
        <end position="609"/>
    </location>
</feature>
<feature type="strand" evidence="16">
    <location>
        <begin position="612"/>
        <end position="617"/>
    </location>
</feature>
<feature type="helix" evidence="16">
    <location>
        <begin position="618"/>
        <end position="621"/>
    </location>
</feature>
<feature type="strand" evidence="16">
    <location>
        <begin position="626"/>
        <end position="629"/>
    </location>
</feature>
<feature type="helix" evidence="16">
    <location>
        <begin position="630"/>
        <end position="632"/>
    </location>
</feature>
<feature type="strand" evidence="16">
    <location>
        <begin position="638"/>
        <end position="640"/>
    </location>
</feature>
<feature type="helix" evidence="16">
    <location>
        <begin position="644"/>
        <end position="647"/>
    </location>
</feature>
<feature type="helix" evidence="16">
    <location>
        <begin position="652"/>
        <end position="654"/>
    </location>
</feature>
<feature type="helix" evidence="16">
    <location>
        <begin position="658"/>
        <end position="660"/>
    </location>
</feature>
<feature type="helix" evidence="16">
    <location>
        <begin position="663"/>
        <end position="672"/>
    </location>
</feature>
<feature type="helix" evidence="16">
    <location>
        <begin position="673"/>
        <end position="675"/>
    </location>
</feature>
<feature type="helix" evidence="16">
    <location>
        <begin position="682"/>
        <end position="685"/>
    </location>
</feature>
<feature type="strand" evidence="16">
    <location>
        <begin position="690"/>
        <end position="697"/>
    </location>
</feature>
<feature type="strand" evidence="16">
    <location>
        <begin position="702"/>
        <end position="704"/>
    </location>
</feature>
<feature type="helix" evidence="16">
    <location>
        <begin position="706"/>
        <end position="710"/>
    </location>
</feature>
<feature type="turn" evidence="15">
    <location>
        <begin position="713"/>
        <end position="715"/>
    </location>
</feature>
<feature type="strand" evidence="16">
    <location>
        <begin position="719"/>
        <end position="726"/>
    </location>
</feature>
<feature type="strand" evidence="16">
    <location>
        <begin position="738"/>
        <end position="741"/>
    </location>
</feature>
<feature type="helix" evidence="16">
    <location>
        <begin position="742"/>
        <end position="745"/>
    </location>
</feature>
<feature type="turn" evidence="16">
    <location>
        <begin position="746"/>
        <end position="750"/>
    </location>
</feature>
<feature type="strand" evidence="16">
    <location>
        <begin position="752"/>
        <end position="761"/>
    </location>
</feature>
<feature type="strand" evidence="15">
    <location>
        <begin position="778"/>
        <end position="781"/>
    </location>
</feature>
<feature type="helix" evidence="16">
    <location>
        <begin position="786"/>
        <end position="789"/>
    </location>
</feature>
<feature type="strand" evidence="15">
    <location>
        <begin position="796"/>
        <end position="798"/>
    </location>
</feature>
<feature type="strand" evidence="16">
    <location>
        <begin position="809"/>
        <end position="811"/>
    </location>
</feature>
<feature type="strand" evidence="16">
    <location>
        <begin position="845"/>
        <end position="854"/>
    </location>
</feature>
<feature type="strand" evidence="16">
    <location>
        <begin position="856"/>
        <end position="858"/>
    </location>
</feature>
<feature type="strand" evidence="16">
    <location>
        <begin position="860"/>
        <end position="870"/>
    </location>
</feature>
<feature type="strand" evidence="16">
    <location>
        <begin position="877"/>
        <end position="880"/>
    </location>
</feature>
<feature type="strand" evidence="16">
    <location>
        <begin position="885"/>
        <end position="892"/>
    </location>
</feature>
<feature type="turn" evidence="16">
    <location>
        <begin position="894"/>
        <end position="896"/>
    </location>
</feature>
<feature type="strand" evidence="16">
    <location>
        <begin position="897"/>
        <end position="900"/>
    </location>
</feature>
<feature type="strand" evidence="16">
    <location>
        <begin position="907"/>
        <end position="909"/>
    </location>
</feature>
<feature type="turn" evidence="16">
    <location>
        <begin position="916"/>
        <end position="919"/>
    </location>
</feature>
<feature type="helix" evidence="16">
    <location>
        <begin position="921"/>
        <end position="936"/>
    </location>
</feature>
<feature type="strand" evidence="15">
    <location>
        <begin position="944"/>
        <end position="947"/>
    </location>
</feature>
<feature type="helix" evidence="16">
    <location>
        <begin position="951"/>
        <end position="959"/>
    </location>
</feature>
<feature type="strand" evidence="16">
    <location>
        <begin position="966"/>
        <end position="968"/>
    </location>
</feature>
<feature type="strand" evidence="16">
    <location>
        <begin position="970"/>
        <end position="972"/>
    </location>
</feature>
<feature type="turn" evidence="16">
    <location>
        <begin position="973"/>
        <end position="975"/>
    </location>
</feature>
<feature type="strand" evidence="16">
    <location>
        <begin position="983"/>
        <end position="994"/>
    </location>
</feature>
<feature type="helix" evidence="16">
    <location>
        <begin position="997"/>
        <end position="1000"/>
    </location>
</feature>
<feature type="strand" evidence="16">
    <location>
        <begin position="1002"/>
        <end position="1006"/>
    </location>
</feature>
<feature type="turn" evidence="16">
    <location>
        <begin position="1011"/>
        <end position="1013"/>
    </location>
</feature>
<feature type="helix" evidence="16">
    <location>
        <begin position="1020"/>
        <end position="1022"/>
    </location>
</feature>
<feature type="helix" evidence="16">
    <location>
        <begin position="1030"/>
        <end position="1039"/>
    </location>
</feature>
<feature type="helix" evidence="16">
    <location>
        <begin position="1042"/>
        <end position="1048"/>
    </location>
</feature>
<feature type="turn" evidence="16">
    <location>
        <begin position="1049"/>
        <end position="1053"/>
    </location>
</feature>
<feature type="strand" evidence="16">
    <location>
        <begin position="1055"/>
        <end position="1060"/>
    </location>
</feature>
<feature type="strand" evidence="16">
    <location>
        <begin position="1062"/>
        <end position="1064"/>
    </location>
</feature>
<feature type="strand" evidence="16">
    <location>
        <begin position="1069"/>
        <end position="1071"/>
    </location>
</feature>
<feature type="turn" evidence="16">
    <location>
        <begin position="1072"/>
        <end position="1075"/>
    </location>
</feature>
<feature type="strand" evidence="16">
    <location>
        <begin position="1076"/>
        <end position="1078"/>
    </location>
</feature>
<feature type="strand" evidence="16">
    <location>
        <begin position="1083"/>
        <end position="1086"/>
    </location>
</feature>
<feature type="strand" evidence="16">
    <location>
        <begin position="1089"/>
        <end position="1094"/>
    </location>
</feature>
<feature type="helix" evidence="16">
    <location>
        <begin position="1095"/>
        <end position="1105"/>
    </location>
</feature>
<feature type="turn" evidence="16">
    <location>
        <begin position="1106"/>
        <end position="1108"/>
    </location>
</feature>
<feature type="strand" evidence="16">
    <location>
        <begin position="1110"/>
        <end position="1119"/>
    </location>
</feature>